<feature type="signal peptide" evidence="2">
    <location>
        <begin position="1"/>
        <end position="19"/>
    </location>
</feature>
<feature type="chain" id="PRO_0000393187" description="Probable endo-1,4-beta-xylanase F3">
    <location>
        <begin position="20"/>
        <end position="324"/>
    </location>
</feature>
<feature type="domain" description="GH10" evidence="3">
    <location>
        <begin position="45"/>
        <end position="323"/>
    </location>
</feature>
<feature type="active site" description="Proton donor" evidence="1">
    <location>
        <position position="155"/>
    </location>
</feature>
<feature type="active site" description="Nucleophile" evidence="1">
    <location>
        <position position="260"/>
    </location>
</feature>
<feature type="disulfide bond" evidence="1">
    <location>
        <begin position="278"/>
        <end position="284"/>
    </location>
</feature>
<accession>B8NXJ2</accession>
<dbReference type="EC" id="3.2.1.8"/>
<dbReference type="EMBL" id="EQ963486">
    <property type="protein sequence ID" value="EED44928.1"/>
    <property type="molecule type" value="Genomic_DNA"/>
</dbReference>
<dbReference type="RefSeq" id="XP_002385057.1">
    <property type="nucleotide sequence ID" value="XM_002385016.1"/>
</dbReference>
<dbReference type="SMR" id="B8NXJ2"/>
<dbReference type="STRING" id="332952.B8NXJ2"/>
<dbReference type="EnsemblFungi" id="EED44928">
    <property type="protein sequence ID" value="EED44928"/>
    <property type="gene ID" value="AFLA_008110"/>
</dbReference>
<dbReference type="VEuPathDB" id="FungiDB:AFLA_008549"/>
<dbReference type="eggNOG" id="ENOG502QSCW">
    <property type="taxonomic scope" value="Eukaryota"/>
</dbReference>
<dbReference type="HOGENOM" id="CLU_020161_2_0_1"/>
<dbReference type="OMA" id="WGLNYPK"/>
<dbReference type="UniPathway" id="UPA00114"/>
<dbReference type="GO" id="GO:0005576">
    <property type="term" value="C:extracellular region"/>
    <property type="evidence" value="ECO:0000250"/>
    <property type="project" value="UniProtKB"/>
</dbReference>
<dbReference type="GO" id="GO:0031176">
    <property type="term" value="F:endo-1,4-beta-xylanase activity"/>
    <property type="evidence" value="ECO:0000250"/>
    <property type="project" value="UniProtKB"/>
</dbReference>
<dbReference type="GO" id="GO:0045493">
    <property type="term" value="P:xylan catabolic process"/>
    <property type="evidence" value="ECO:0000250"/>
    <property type="project" value="UniProtKB"/>
</dbReference>
<dbReference type="FunFam" id="3.20.20.80:FF:000094">
    <property type="entry name" value="Endo-1,4-beta-xylanase"/>
    <property type="match status" value="1"/>
</dbReference>
<dbReference type="Gene3D" id="3.20.20.80">
    <property type="entry name" value="Glycosidases"/>
    <property type="match status" value="1"/>
</dbReference>
<dbReference type="InterPro" id="IPR044846">
    <property type="entry name" value="GH10"/>
</dbReference>
<dbReference type="InterPro" id="IPR001000">
    <property type="entry name" value="GH10_dom"/>
</dbReference>
<dbReference type="InterPro" id="IPR017853">
    <property type="entry name" value="Glycoside_hydrolase_SF"/>
</dbReference>
<dbReference type="PANTHER" id="PTHR31490:SF76">
    <property type="entry name" value="ENDO-1,4-BETA-XYLANASE C"/>
    <property type="match status" value="1"/>
</dbReference>
<dbReference type="PANTHER" id="PTHR31490">
    <property type="entry name" value="GLYCOSYL HYDROLASE"/>
    <property type="match status" value="1"/>
</dbReference>
<dbReference type="Pfam" id="PF00331">
    <property type="entry name" value="Glyco_hydro_10"/>
    <property type="match status" value="1"/>
</dbReference>
<dbReference type="PRINTS" id="PR00134">
    <property type="entry name" value="GLHYDRLASE10"/>
</dbReference>
<dbReference type="SMART" id="SM00633">
    <property type="entry name" value="Glyco_10"/>
    <property type="match status" value="1"/>
</dbReference>
<dbReference type="SUPFAM" id="SSF51445">
    <property type="entry name" value="(Trans)glycosidases"/>
    <property type="match status" value="1"/>
</dbReference>
<dbReference type="PROSITE" id="PS51760">
    <property type="entry name" value="GH10_2"/>
    <property type="match status" value="1"/>
</dbReference>
<evidence type="ECO:0000250" key="1"/>
<evidence type="ECO:0000255" key="2"/>
<evidence type="ECO:0000255" key="3">
    <source>
        <dbReference type="PROSITE-ProRule" id="PRU01096"/>
    </source>
</evidence>
<evidence type="ECO:0000305" key="4"/>
<reference key="1">
    <citation type="journal article" date="2015" name="Genome Announc.">
        <title>Genome sequence of Aspergillus flavus NRRL 3357, a strain that causes aflatoxin contamination of food and feed.</title>
        <authorList>
            <person name="Nierman W.C."/>
            <person name="Yu J."/>
            <person name="Fedorova-Abrams N.D."/>
            <person name="Losada L."/>
            <person name="Cleveland T.E."/>
            <person name="Bhatnagar D."/>
            <person name="Bennett J.W."/>
            <person name="Dean R."/>
            <person name="Payne G.A."/>
        </authorList>
    </citation>
    <scope>NUCLEOTIDE SEQUENCE [LARGE SCALE GENOMIC DNA]</scope>
    <source>
        <strain>ATCC 200026 / FGSC A1120 / IAM 13836 / NRRL 3357 / JCM 12722 / SRRC 167</strain>
    </source>
</reference>
<sequence length="324" mass="35239">MVHLKALASGTLFASLASSAVISRQAAASINDAFVAHGKKYFGTCSDQALLQNSQNEAIVRADFGQLTPENSMKWDALEPSQGSFSFAGADFLADYAKTNNKLVRGHTLVWHSQLPSWVQGITDKDTLTEVIKNHITTIMQRYKGQIYAWDVVNEIFDEDGTLRDSVFSQVLGEDFVRIAFETAREADPNAKLYINDYNLDSADYAKTKGMVSYVKKWLDAGVPIDGIVSLLPPRDEGLTSCTALTALASTGVSEVAVTELDIEGASSESYLEVVNACLDVSSCVGITVWGVSDKDSWRSSTSPLLFDSNYQAKDAYNAIIDAL</sequence>
<comment type="function">
    <text evidence="1">Endo-1,4-beta-xylanase involved in the hydrolysis of xylan, a major structural heterogeneous polysaccharide found in plant biomass representing the second most abundant polysaccharide in the biosphere, after cellulose.</text>
</comment>
<comment type="catalytic activity">
    <reaction>
        <text>Endohydrolysis of (1-&gt;4)-beta-D-xylosidic linkages in xylans.</text>
        <dbReference type="EC" id="3.2.1.8"/>
    </reaction>
</comment>
<comment type="pathway">
    <text>Glycan degradation; xylan degradation.</text>
</comment>
<comment type="subcellular location">
    <subcellularLocation>
        <location evidence="1">Secreted</location>
    </subcellularLocation>
</comment>
<comment type="induction">
    <text>Expressed in presence of xylan and repressed by glucose.</text>
</comment>
<comment type="similarity">
    <text evidence="4">Belongs to the glycosyl hydrolase 10 (cellulase F) family.</text>
</comment>
<organism>
    <name type="scientific">Aspergillus flavus (strain ATCC 200026 / FGSC A1120 / IAM 13836 / NRRL 3357 / JCM 12722 / SRRC 167)</name>
    <dbReference type="NCBI Taxonomy" id="332952"/>
    <lineage>
        <taxon>Eukaryota</taxon>
        <taxon>Fungi</taxon>
        <taxon>Dikarya</taxon>
        <taxon>Ascomycota</taxon>
        <taxon>Pezizomycotina</taxon>
        <taxon>Eurotiomycetes</taxon>
        <taxon>Eurotiomycetidae</taxon>
        <taxon>Eurotiales</taxon>
        <taxon>Aspergillaceae</taxon>
        <taxon>Aspergillus</taxon>
        <taxon>Aspergillus subgen. Circumdati</taxon>
    </lineage>
</organism>
<protein>
    <recommendedName>
        <fullName>Probable endo-1,4-beta-xylanase F3</fullName>
        <shortName>Xylanase F3</shortName>
        <ecNumber>3.2.1.8</ecNumber>
    </recommendedName>
    <alternativeName>
        <fullName>1,4-beta-D-xylan xylanohydrolase F3</fullName>
    </alternativeName>
</protein>
<name>XYNF3_ASPFN</name>
<keyword id="KW-0119">Carbohydrate metabolism</keyword>
<keyword id="KW-1015">Disulfide bond</keyword>
<keyword id="KW-0326">Glycosidase</keyword>
<keyword id="KW-0378">Hydrolase</keyword>
<keyword id="KW-0624">Polysaccharide degradation</keyword>
<keyword id="KW-0964">Secreted</keyword>
<keyword id="KW-0732">Signal</keyword>
<keyword id="KW-0858">Xylan degradation</keyword>
<proteinExistence type="evidence at transcript level"/>
<gene>
    <name type="primary">xynF3</name>
    <name type="synonym">xlnF3</name>
    <name type="ORF">AFLA_008110</name>
</gene>